<gene>
    <name evidence="1" type="primary">cheD</name>
    <name type="ordered locus">NT01CX_1861</name>
</gene>
<reference key="1">
    <citation type="journal article" date="2006" name="Nat. Biotechnol.">
        <title>The genome and transcriptomes of the anti-tumor agent Clostridium novyi-NT.</title>
        <authorList>
            <person name="Bettegowda C."/>
            <person name="Huang X."/>
            <person name="Lin J."/>
            <person name="Cheong I."/>
            <person name="Kohli M."/>
            <person name="Szabo S.A."/>
            <person name="Zhang X."/>
            <person name="Diaz L.A. Jr."/>
            <person name="Velculescu V.E."/>
            <person name="Parmigiani G."/>
            <person name="Kinzler K.W."/>
            <person name="Vogelstein B."/>
            <person name="Zhou S."/>
        </authorList>
    </citation>
    <scope>NUCLEOTIDE SEQUENCE [LARGE SCALE GENOMIC DNA]</scope>
    <source>
        <strain>NT</strain>
    </source>
</reference>
<evidence type="ECO:0000255" key="1">
    <source>
        <dbReference type="HAMAP-Rule" id="MF_01440"/>
    </source>
</evidence>
<accession>A0PZY2</accession>
<name>CHED_CLONN</name>
<proteinExistence type="inferred from homology"/>
<keyword id="KW-0145">Chemotaxis</keyword>
<keyword id="KW-0378">Hydrolase</keyword>
<keyword id="KW-1185">Reference proteome</keyword>
<sequence>MNKDEIRIGIADLNVALPPKKLITVGLGSCIGIALYDSIKKIGGLAHIMLPDSTQFSNVSNPMKFADLAIPMLLEKMEKQGAVKRHLKAKIAGGASMFNFSDKSMIMDIGNRNSKSVKKVLGEYGIPIISEDTGGNKGRTMIFSTEDGMVEIRTVGMGIRAI</sequence>
<feature type="chain" id="PRO_1000073516" description="Probable chemoreceptor glutamine deamidase CheD">
    <location>
        <begin position="1"/>
        <end position="162"/>
    </location>
</feature>
<dbReference type="EC" id="3.5.1.44" evidence="1"/>
<dbReference type="EMBL" id="CP000382">
    <property type="protein sequence ID" value="ABK60483.1"/>
    <property type="molecule type" value="Genomic_DNA"/>
</dbReference>
<dbReference type="RefSeq" id="WP_011721938.1">
    <property type="nucleotide sequence ID" value="NC_008593.1"/>
</dbReference>
<dbReference type="SMR" id="A0PZY2"/>
<dbReference type="STRING" id="386415.NT01CX_1861"/>
<dbReference type="KEGG" id="cno:NT01CX_1861"/>
<dbReference type="eggNOG" id="COG1871">
    <property type="taxonomic scope" value="Bacteria"/>
</dbReference>
<dbReference type="HOGENOM" id="CLU_087854_2_0_9"/>
<dbReference type="Proteomes" id="UP000008220">
    <property type="component" value="Chromosome"/>
</dbReference>
<dbReference type="GO" id="GO:0050568">
    <property type="term" value="F:protein-glutamine glutaminase activity"/>
    <property type="evidence" value="ECO:0007669"/>
    <property type="project" value="UniProtKB-UniRule"/>
</dbReference>
<dbReference type="GO" id="GO:0006935">
    <property type="term" value="P:chemotaxis"/>
    <property type="evidence" value="ECO:0007669"/>
    <property type="project" value="UniProtKB-UniRule"/>
</dbReference>
<dbReference type="CDD" id="cd16352">
    <property type="entry name" value="CheD"/>
    <property type="match status" value="1"/>
</dbReference>
<dbReference type="Gene3D" id="3.30.1330.200">
    <property type="match status" value="1"/>
</dbReference>
<dbReference type="HAMAP" id="MF_01440">
    <property type="entry name" value="CheD"/>
    <property type="match status" value="1"/>
</dbReference>
<dbReference type="InterPro" id="IPR038592">
    <property type="entry name" value="CheD-like_sf"/>
</dbReference>
<dbReference type="InterPro" id="IPR005659">
    <property type="entry name" value="Chemorcpt_Glu_NH3ase_CheD"/>
</dbReference>
<dbReference type="InterPro" id="IPR011324">
    <property type="entry name" value="Cytotoxic_necrot_fac-like_cat"/>
</dbReference>
<dbReference type="NCBIfam" id="NF010015">
    <property type="entry name" value="PRK13490.1"/>
    <property type="match status" value="1"/>
</dbReference>
<dbReference type="PANTHER" id="PTHR35147">
    <property type="entry name" value="CHEMORECEPTOR GLUTAMINE DEAMIDASE CHED-RELATED"/>
    <property type="match status" value="1"/>
</dbReference>
<dbReference type="PANTHER" id="PTHR35147:SF1">
    <property type="entry name" value="CHEMORECEPTOR GLUTAMINE DEAMIDASE CHED-RELATED"/>
    <property type="match status" value="1"/>
</dbReference>
<dbReference type="Pfam" id="PF03975">
    <property type="entry name" value="CheD"/>
    <property type="match status" value="1"/>
</dbReference>
<dbReference type="SUPFAM" id="SSF64438">
    <property type="entry name" value="CNF1/YfiH-like putative cysteine hydrolases"/>
    <property type="match status" value="1"/>
</dbReference>
<comment type="function">
    <text evidence="1">Probably deamidates glutamine residues to glutamate on methyl-accepting chemotaxis receptors (MCPs), playing an important role in chemotaxis.</text>
</comment>
<comment type="catalytic activity">
    <reaction evidence="1">
        <text>L-glutaminyl-[protein] + H2O = L-glutamyl-[protein] + NH4(+)</text>
        <dbReference type="Rhea" id="RHEA:16441"/>
        <dbReference type="Rhea" id="RHEA-COMP:10207"/>
        <dbReference type="Rhea" id="RHEA-COMP:10208"/>
        <dbReference type="ChEBI" id="CHEBI:15377"/>
        <dbReference type="ChEBI" id="CHEBI:28938"/>
        <dbReference type="ChEBI" id="CHEBI:29973"/>
        <dbReference type="ChEBI" id="CHEBI:30011"/>
        <dbReference type="EC" id="3.5.1.44"/>
    </reaction>
</comment>
<comment type="similarity">
    <text evidence="1">Belongs to the CheD family.</text>
</comment>
<protein>
    <recommendedName>
        <fullName evidence="1">Probable chemoreceptor glutamine deamidase CheD</fullName>
        <ecNumber evidence="1">3.5.1.44</ecNumber>
    </recommendedName>
</protein>
<organism>
    <name type="scientific">Clostridium novyi (strain NT)</name>
    <dbReference type="NCBI Taxonomy" id="386415"/>
    <lineage>
        <taxon>Bacteria</taxon>
        <taxon>Bacillati</taxon>
        <taxon>Bacillota</taxon>
        <taxon>Clostridia</taxon>
        <taxon>Eubacteriales</taxon>
        <taxon>Clostridiaceae</taxon>
        <taxon>Clostridium</taxon>
    </lineage>
</organism>